<accession>Q1R766</accession>
<proteinExistence type="inferred from homology"/>
<keyword id="KW-0489">Methyltransferase</keyword>
<keyword id="KW-0949">S-adenosyl-L-methionine</keyword>
<keyword id="KW-0808">Transferase</keyword>
<keyword id="KW-0819">tRNA processing</keyword>
<sequence length="239" mass="27337">MKNDVISPEFDENGRPLRRIRSFVRRQGRLTKGQEHALENYWPVMGVEFSEDMLDFPALFGREAPVTLEIGFGMGASLVAMAKDRPEQDFLGIEVHSPGVGACLSSAHEEGLSNLRVMCHDAVEVLHKMIPDNSLRMVQLFFPDPWHKARHNKRRIVQVPFAELVKSKLQLGGIFHMATDWEPYAEHMLEVMSSIDGYKNLSESNDYVPRPASRPVTKFEQRGHRLGHGVWDLMFERVK</sequence>
<reference key="1">
    <citation type="journal article" date="2006" name="Proc. Natl. Acad. Sci. U.S.A.">
        <title>Identification of genes subject to positive selection in uropathogenic strains of Escherichia coli: a comparative genomics approach.</title>
        <authorList>
            <person name="Chen S.L."/>
            <person name="Hung C.-S."/>
            <person name="Xu J."/>
            <person name="Reigstad C.S."/>
            <person name="Magrini V."/>
            <person name="Sabo A."/>
            <person name="Blasiar D."/>
            <person name="Bieri T."/>
            <person name="Meyer R.R."/>
            <person name="Ozersky P."/>
            <person name="Armstrong J.R."/>
            <person name="Fulton R.S."/>
            <person name="Latreille J.P."/>
            <person name="Spieth J."/>
            <person name="Hooton T.M."/>
            <person name="Mardis E.R."/>
            <person name="Hultgren S.J."/>
            <person name="Gordon J.I."/>
        </authorList>
    </citation>
    <scope>NUCLEOTIDE SEQUENCE [LARGE SCALE GENOMIC DNA]</scope>
    <source>
        <strain>UTI89 / UPEC</strain>
    </source>
</reference>
<name>TRMB_ECOUT</name>
<feature type="chain" id="PRO_0000288147" description="tRNA (guanine-N(7)-)-methyltransferase">
    <location>
        <begin position="1"/>
        <end position="239"/>
    </location>
</feature>
<feature type="region of interest" description="Interaction with RNA" evidence="2">
    <location>
        <begin position="150"/>
        <end position="155"/>
    </location>
</feature>
<feature type="active site" evidence="1">
    <location>
        <position position="144"/>
    </location>
</feature>
<feature type="binding site" evidence="2">
    <location>
        <position position="69"/>
    </location>
    <ligand>
        <name>S-adenosyl-L-methionine</name>
        <dbReference type="ChEBI" id="CHEBI:59789"/>
    </ligand>
</feature>
<feature type="binding site" evidence="2">
    <location>
        <position position="94"/>
    </location>
    <ligand>
        <name>S-adenosyl-L-methionine</name>
        <dbReference type="ChEBI" id="CHEBI:59789"/>
    </ligand>
</feature>
<feature type="binding site" evidence="2">
    <location>
        <position position="121"/>
    </location>
    <ligand>
        <name>S-adenosyl-L-methionine</name>
        <dbReference type="ChEBI" id="CHEBI:59789"/>
    </ligand>
</feature>
<feature type="binding site" evidence="2">
    <location>
        <position position="144"/>
    </location>
    <ligand>
        <name>S-adenosyl-L-methionine</name>
        <dbReference type="ChEBI" id="CHEBI:59789"/>
    </ligand>
</feature>
<feature type="binding site" evidence="2">
    <location>
        <position position="148"/>
    </location>
    <ligand>
        <name>substrate</name>
    </ligand>
</feature>
<feature type="binding site" evidence="2">
    <location>
        <position position="180"/>
    </location>
    <ligand>
        <name>substrate</name>
    </ligand>
</feature>
<feature type="binding site" evidence="2">
    <location>
        <begin position="217"/>
        <end position="220"/>
    </location>
    <ligand>
        <name>substrate</name>
    </ligand>
</feature>
<protein>
    <recommendedName>
        <fullName evidence="2">tRNA (guanine-N(7)-)-methyltransferase</fullName>
        <ecNumber evidence="2">2.1.1.33</ecNumber>
    </recommendedName>
    <alternativeName>
        <fullName evidence="2">tRNA (guanine(46)-N(7))-methyltransferase</fullName>
    </alternativeName>
    <alternativeName>
        <fullName evidence="2">tRNA(m7G46)-methyltransferase</fullName>
    </alternativeName>
</protein>
<dbReference type="EC" id="2.1.1.33" evidence="2"/>
<dbReference type="EMBL" id="CP000243">
    <property type="protein sequence ID" value="ABE08798.1"/>
    <property type="molecule type" value="Genomic_DNA"/>
</dbReference>
<dbReference type="RefSeq" id="WP_000786915.1">
    <property type="nucleotide sequence ID" value="NZ_CP064825.1"/>
</dbReference>
<dbReference type="SMR" id="Q1R766"/>
<dbReference type="KEGG" id="eci:UTI89_C3350"/>
<dbReference type="HOGENOM" id="CLU_050910_0_1_6"/>
<dbReference type="UniPathway" id="UPA00989"/>
<dbReference type="Proteomes" id="UP000001952">
    <property type="component" value="Chromosome"/>
</dbReference>
<dbReference type="GO" id="GO:0043527">
    <property type="term" value="C:tRNA methyltransferase complex"/>
    <property type="evidence" value="ECO:0007669"/>
    <property type="project" value="TreeGrafter"/>
</dbReference>
<dbReference type="GO" id="GO:0008176">
    <property type="term" value="F:tRNA (guanine(46)-N7)-methyltransferase activity"/>
    <property type="evidence" value="ECO:0007669"/>
    <property type="project" value="UniProtKB-UniRule"/>
</dbReference>
<dbReference type="FunFam" id="3.40.50.150:FF:000024">
    <property type="entry name" value="tRNA (guanine-N(7)-)-methyltransferase"/>
    <property type="match status" value="1"/>
</dbReference>
<dbReference type="Gene3D" id="3.40.50.150">
    <property type="entry name" value="Vaccinia Virus protein VP39"/>
    <property type="match status" value="1"/>
</dbReference>
<dbReference type="HAMAP" id="MF_01057">
    <property type="entry name" value="tRNA_methyltr_TrmB"/>
    <property type="match status" value="1"/>
</dbReference>
<dbReference type="InterPro" id="IPR029063">
    <property type="entry name" value="SAM-dependent_MTases_sf"/>
</dbReference>
<dbReference type="InterPro" id="IPR003358">
    <property type="entry name" value="tRNA_(Gua-N-7)_MeTrfase_Trmb"/>
</dbReference>
<dbReference type="InterPro" id="IPR055361">
    <property type="entry name" value="tRNA_methyltr_TrmB_bact"/>
</dbReference>
<dbReference type="NCBIfam" id="TIGR00091">
    <property type="entry name" value="tRNA (guanosine(46)-N7)-methyltransferase TrmB"/>
    <property type="match status" value="1"/>
</dbReference>
<dbReference type="PANTHER" id="PTHR23417">
    <property type="entry name" value="3-DEOXY-D-MANNO-OCTULOSONIC-ACID TRANSFERASE/TRNA GUANINE-N 7 - -METHYLTRANSFERASE"/>
    <property type="match status" value="1"/>
</dbReference>
<dbReference type="PANTHER" id="PTHR23417:SF14">
    <property type="entry name" value="PENTACOTRIPEPTIDE-REPEAT REGION OF PRORP DOMAIN-CONTAINING PROTEIN"/>
    <property type="match status" value="1"/>
</dbReference>
<dbReference type="Pfam" id="PF02390">
    <property type="entry name" value="Methyltransf_4"/>
    <property type="match status" value="1"/>
</dbReference>
<dbReference type="SUPFAM" id="SSF53335">
    <property type="entry name" value="S-adenosyl-L-methionine-dependent methyltransferases"/>
    <property type="match status" value="1"/>
</dbReference>
<dbReference type="PROSITE" id="PS51625">
    <property type="entry name" value="SAM_MT_TRMB"/>
    <property type="match status" value="1"/>
</dbReference>
<organism>
    <name type="scientific">Escherichia coli (strain UTI89 / UPEC)</name>
    <dbReference type="NCBI Taxonomy" id="364106"/>
    <lineage>
        <taxon>Bacteria</taxon>
        <taxon>Pseudomonadati</taxon>
        <taxon>Pseudomonadota</taxon>
        <taxon>Gammaproteobacteria</taxon>
        <taxon>Enterobacterales</taxon>
        <taxon>Enterobacteriaceae</taxon>
        <taxon>Escherichia</taxon>
    </lineage>
</organism>
<gene>
    <name evidence="2" type="primary">trmB</name>
    <name type="ordered locus">UTI89_C3350</name>
</gene>
<comment type="function">
    <text evidence="2">Catalyzes the formation of N(7)-methylguanine at position 46 (m7G46) in tRNA.</text>
</comment>
<comment type="catalytic activity">
    <reaction evidence="2">
        <text>guanosine(46) in tRNA + S-adenosyl-L-methionine = N(7)-methylguanosine(46) in tRNA + S-adenosyl-L-homocysteine</text>
        <dbReference type="Rhea" id="RHEA:42708"/>
        <dbReference type="Rhea" id="RHEA-COMP:10188"/>
        <dbReference type="Rhea" id="RHEA-COMP:10189"/>
        <dbReference type="ChEBI" id="CHEBI:57856"/>
        <dbReference type="ChEBI" id="CHEBI:59789"/>
        <dbReference type="ChEBI" id="CHEBI:74269"/>
        <dbReference type="ChEBI" id="CHEBI:74480"/>
        <dbReference type="EC" id="2.1.1.33"/>
    </reaction>
</comment>
<comment type="pathway">
    <text evidence="2">tRNA modification; N(7)-methylguanine-tRNA biosynthesis.</text>
</comment>
<comment type="subunit">
    <text evidence="2">Monomer.</text>
</comment>
<comment type="similarity">
    <text evidence="2">Belongs to the class I-like SAM-binding methyltransferase superfamily. TrmB family.</text>
</comment>
<evidence type="ECO:0000250" key="1"/>
<evidence type="ECO:0000255" key="2">
    <source>
        <dbReference type="HAMAP-Rule" id="MF_01057"/>
    </source>
</evidence>